<dbReference type="EC" id="6.1.1.5" evidence="1"/>
<dbReference type="EMBL" id="CP001336">
    <property type="protein sequence ID" value="ACL22051.1"/>
    <property type="molecule type" value="Genomic_DNA"/>
</dbReference>
<dbReference type="RefSeq" id="WP_015944977.1">
    <property type="nucleotide sequence ID" value="NC_011830.1"/>
</dbReference>
<dbReference type="SMR" id="B8FT35"/>
<dbReference type="KEGG" id="dhd:Dhaf_4041"/>
<dbReference type="HOGENOM" id="CLU_001493_7_0_9"/>
<dbReference type="Proteomes" id="UP000007726">
    <property type="component" value="Chromosome"/>
</dbReference>
<dbReference type="GO" id="GO:0005829">
    <property type="term" value="C:cytosol"/>
    <property type="evidence" value="ECO:0007669"/>
    <property type="project" value="TreeGrafter"/>
</dbReference>
<dbReference type="GO" id="GO:0002161">
    <property type="term" value="F:aminoacyl-tRNA deacylase activity"/>
    <property type="evidence" value="ECO:0007669"/>
    <property type="project" value="InterPro"/>
</dbReference>
<dbReference type="GO" id="GO:0005524">
    <property type="term" value="F:ATP binding"/>
    <property type="evidence" value="ECO:0007669"/>
    <property type="project" value="UniProtKB-UniRule"/>
</dbReference>
<dbReference type="GO" id="GO:0004822">
    <property type="term" value="F:isoleucine-tRNA ligase activity"/>
    <property type="evidence" value="ECO:0007669"/>
    <property type="project" value="UniProtKB-UniRule"/>
</dbReference>
<dbReference type="GO" id="GO:0000049">
    <property type="term" value="F:tRNA binding"/>
    <property type="evidence" value="ECO:0007669"/>
    <property type="project" value="InterPro"/>
</dbReference>
<dbReference type="GO" id="GO:0008270">
    <property type="term" value="F:zinc ion binding"/>
    <property type="evidence" value="ECO:0007669"/>
    <property type="project" value="UniProtKB-UniRule"/>
</dbReference>
<dbReference type="GO" id="GO:0006428">
    <property type="term" value="P:isoleucyl-tRNA aminoacylation"/>
    <property type="evidence" value="ECO:0007669"/>
    <property type="project" value="UniProtKB-UniRule"/>
</dbReference>
<dbReference type="CDD" id="cd07960">
    <property type="entry name" value="Anticodon_Ia_Ile_BEm"/>
    <property type="match status" value="1"/>
</dbReference>
<dbReference type="CDD" id="cd00818">
    <property type="entry name" value="IleRS_core"/>
    <property type="match status" value="1"/>
</dbReference>
<dbReference type="FunFam" id="1.10.730.20:FF:000001">
    <property type="entry name" value="Isoleucine--tRNA ligase"/>
    <property type="match status" value="1"/>
</dbReference>
<dbReference type="FunFam" id="3.40.50.620:FF:000152">
    <property type="entry name" value="Isoleucine--tRNA ligase"/>
    <property type="match status" value="1"/>
</dbReference>
<dbReference type="Gene3D" id="1.10.730.20">
    <property type="match status" value="1"/>
</dbReference>
<dbReference type="Gene3D" id="2.170.220.10">
    <property type="match status" value="1"/>
</dbReference>
<dbReference type="Gene3D" id="3.40.50.620">
    <property type="entry name" value="HUPs"/>
    <property type="match status" value="2"/>
</dbReference>
<dbReference type="Gene3D" id="1.10.10.830">
    <property type="entry name" value="Ile-tRNA synthetase CP2 domain-like"/>
    <property type="match status" value="1"/>
</dbReference>
<dbReference type="Gene3D" id="3.90.740.10">
    <property type="entry name" value="Valyl/Leucyl/Isoleucyl-tRNA synthetase, editing domain"/>
    <property type="match status" value="1"/>
</dbReference>
<dbReference type="HAMAP" id="MF_02002">
    <property type="entry name" value="Ile_tRNA_synth_type1"/>
    <property type="match status" value="1"/>
</dbReference>
<dbReference type="InterPro" id="IPR001412">
    <property type="entry name" value="aa-tRNA-synth_I_CS"/>
</dbReference>
<dbReference type="InterPro" id="IPR002300">
    <property type="entry name" value="aa-tRNA-synth_Ia"/>
</dbReference>
<dbReference type="InterPro" id="IPR033708">
    <property type="entry name" value="Anticodon_Ile_BEm"/>
</dbReference>
<dbReference type="InterPro" id="IPR002301">
    <property type="entry name" value="Ile-tRNA-ligase"/>
</dbReference>
<dbReference type="InterPro" id="IPR023585">
    <property type="entry name" value="Ile-tRNA-ligase_type1"/>
</dbReference>
<dbReference type="InterPro" id="IPR050081">
    <property type="entry name" value="Ile-tRNA_ligase"/>
</dbReference>
<dbReference type="InterPro" id="IPR013155">
    <property type="entry name" value="M/V/L/I-tRNA-synth_anticd-bd"/>
</dbReference>
<dbReference type="InterPro" id="IPR014729">
    <property type="entry name" value="Rossmann-like_a/b/a_fold"/>
</dbReference>
<dbReference type="InterPro" id="IPR009080">
    <property type="entry name" value="tRNAsynth_Ia_anticodon-bd"/>
</dbReference>
<dbReference type="InterPro" id="IPR009008">
    <property type="entry name" value="Val/Leu/Ile-tRNA-synth_edit"/>
</dbReference>
<dbReference type="InterPro" id="IPR010663">
    <property type="entry name" value="Znf_FPG/IleRS"/>
</dbReference>
<dbReference type="NCBIfam" id="TIGR00392">
    <property type="entry name" value="ileS"/>
    <property type="match status" value="1"/>
</dbReference>
<dbReference type="PANTHER" id="PTHR42765:SF1">
    <property type="entry name" value="ISOLEUCINE--TRNA LIGASE, MITOCHONDRIAL"/>
    <property type="match status" value="1"/>
</dbReference>
<dbReference type="PANTHER" id="PTHR42765">
    <property type="entry name" value="SOLEUCYL-TRNA SYNTHETASE"/>
    <property type="match status" value="1"/>
</dbReference>
<dbReference type="Pfam" id="PF08264">
    <property type="entry name" value="Anticodon_1"/>
    <property type="match status" value="1"/>
</dbReference>
<dbReference type="Pfam" id="PF00133">
    <property type="entry name" value="tRNA-synt_1"/>
    <property type="match status" value="1"/>
</dbReference>
<dbReference type="Pfam" id="PF06827">
    <property type="entry name" value="zf-FPG_IleRS"/>
    <property type="match status" value="1"/>
</dbReference>
<dbReference type="PRINTS" id="PR00984">
    <property type="entry name" value="TRNASYNTHILE"/>
</dbReference>
<dbReference type="SUPFAM" id="SSF47323">
    <property type="entry name" value="Anticodon-binding domain of a subclass of class I aminoacyl-tRNA synthetases"/>
    <property type="match status" value="1"/>
</dbReference>
<dbReference type="SUPFAM" id="SSF52374">
    <property type="entry name" value="Nucleotidylyl transferase"/>
    <property type="match status" value="1"/>
</dbReference>
<dbReference type="SUPFAM" id="SSF50677">
    <property type="entry name" value="ValRS/IleRS/LeuRS editing domain"/>
    <property type="match status" value="1"/>
</dbReference>
<dbReference type="PROSITE" id="PS00178">
    <property type="entry name" value="AA_TRNA_LIGASE_I"/>
    <property type="match status" value="1"/>
</dbReference>
<comment type="function">
    <text evidence="1">Catalyzes the attachment of isoleucine to tRNA(Ile). As IleRS can inadvertently accommodate and process structurally similar amino acids such as valine, to avoid such errors it has two additional distinct tRNA(Ile)-dependent editing activities. One activity is designated as 'pretransfer' editing and involves the hydrolysis of activated Val-AMP. The other activity is designated 'posttransfer' editing and involves deacylation of mischarged Val-tRNA(Ile).</text>
</comment>
<comment type="catalytic activity">
    <reaction evidence="1">
        <text>tRNA(Ile) + L-isoleucine + ATP = L-isoleucyl-tRNA(Ile) + AMP + diphosphate</text>
        <dbReference type="Rhea" id="RHEA:11060"/>
        <dbReference type="Rhea" id="RHEA-COMP:9666"/>
        <dbReference type="Rhea" id="RHEA-COMP:9695"/>
        <dbReference type="ChEBI" id="CHEBI:30616"/>
        <dbReference type="ChEBI" id="CHEBI:33019"/>
        <dbReference type="ChEBI" id="CHEBI:58045"/>
        <dbReference type="ChEBI" id="CHEBI:78442"/>
        <dbReference type="ChEBI" id="CHEBI:78528"/>
        <dbReference type="ChEBI" id="CHEBI:456215"/>
        <dbReference type="EC" id="6.1.1.5"/>
    </reaction>
</comment>
<comment type="cofactor">
    <cofactor evidence="1">
        <name>Zn(2+)</name>
        <dbReference type="ChEBI" id="CHEBI:29105"/>
    </cofactor>
    <text evidence="1">Binds 1 zinc ion per subunit.</text>
</comment>
<comment type="subunit">
    <text evidence="1">Monomer.</text>
</comment>
<comment type="subcellular location">
    <subcellularLocation>
        <location evidence="1">Cytoplasm</location>
    </subcellularLocation>
</comment>
<comment type="domain">
    <text evidence="1">IleRS has two distinct active sites: one for aminoacylation and one for editing. The misactivated valine is translocated from the active site to the editing site, which sterically excludes the correctly activated isoleucine. The single editing site contains two valyl binding pockets, one specific for each substrate (Val-AMP or Val-tRNA(Ile)).</text>
</comment>
<comment type="similarity">
    <text evidence="1">Belongs to the class-I aminoacyl-tRNA synthetase family. IleS type 1 subfamily.</text>
</comment>
<keyword id="KW-0030">Aminoacyl-tRNA synthetase</keyword>
<keyword id="KW-0067">ATP-binding</keyword>
<keyword id="KW-0963">Cytoplasm</keyword>
<keyword id="KW-0436">Ligase</keyword>
<keyword id="KW-0479">Metal-binding</keyword>
<keyword id="KW-0547">Nucleotide-binding</keyword>
<keyword id="KW-0648">Protein biosynthesis</keyword>
<keyword id="KW-0862">Zinc</keyword>
<name>SYI_DESHD</name>
<organism>
    <name type="scientific">Desulfitobacterium hafniense (strain DSM 10664 / DCB-2)</name>
    <dbReference type="NCBI Taxonomy" id="272564"/>
    <lineage>
        <taxon>Bacteria</taxon>
        <taxon>Bacillati</taxon>
        <taxon>Bacillota</taxon>
        <taxon>Clostridia</taxon>
        <taxon>Eubacteriales</taxon>
        <taxon>Desulfitobacteriaceae</taxon>
        <taxon>Desulfitobacterium</taxon>
    </lineage>
</organism>
<evidence type="ECO:0000255" key="1">
    <source>
        <dbReference type="HAMAP-Rule" id="MF_02002"/>
    </source>
</evidence>
<gene>
    <name evidence="1" type="primary">ileS</name>
    <name type="ordered locus">Dhaf_4041</name>
</gene>
<protein>
    <recommendedName>
        <fullName evidence="1">Isoleucine--tRNA ligase</fullName>
        <ecNumber evidence="1">6.1.1.5</ecNumber>
    </recommendedName>
    <alternativeName>
        <fullName evidence="1">Isoleucyl-tRNA synthetase</fullName>
        <shortName evidence="1">IleRS</shortName>
    </alternativeName>
</protein>
<proteinExistence type="inferred from homology"/>
<reference key="1">
    <citation type="journal article" date="2012" name="BMC Microbiol.">
        <title>Genome sequence of Desulfitobacterium hafniense DCB-2, a Gram-positive anaerobe capable of dehalogenation and metal reduction.</title>
        <authorList>
            <person name="Kim S.H."/>
            <person name="Harzman C."/>
            <person name="Davis J.K."/>
            <person name="Hutcheson R."/>
            <person name="Broderick J.B."/>
            <person name="Marsh T.L."/>
            <person name="Tiedje J.M."/>
        </authorList>
    </citation>
    <scope>NUCLEOTIDE SEQUENCE [LARGE SCALE GENOMIC DNA]</scope>
    <source>
        <strain>DSM 10664 / DCB-2</strain>
    </source>
</reference>
<accession>B8FT35</accession>
<feature type="chain" id="PRO_1000189151" description="Isoleucine--tRNA ligase">
    <location>
        <begin position="1"/>
        <end position="922"/>
    </location>
</feature>
<feature type="short sequence motif" description="'HIGH' region">
    <location>
        <begin position="57"/>
        <end position="67"/>
    </location>
</feature>
<feature type="short sequence motif" description="'KMSKS' region">
    <location>
        <begin position="594"/>
        <end position="598"/>
    </location>
</feature>
<feature type="binding site" evidence="1">
    <location>
        <position position="553"/>
    </location>
    <ligand>
        <name>L-isoleucyl-5'-AMP</name>
        <dbReference type="ChEBI" id="CHEBI:178002"/>
    </ligand>
</feature>
<feature type="binding site" evidence="1">
    <location>
        <position position="597"/>
    </location>
    <ligand>
        <name>ATP</name>
        <dbReference type="ChEBI" id="CHEBI:30616"/>
    </ligand>
</feature>
<feature type="binding site" evidence="1">
    <location>
        <position position="892"/>
    </location>
    <ligand>
        <name>Zn(2+)</name>
        <dbReference type="ChEBI" id="CHEBI:29105"/>
    </ligand>
</feature>
<feature type="binding site" evidence="1">
    <location>
        <position position="895"/>
    </location>
    <ligand>
        <name>Zn(2+)</name>
        <dbReference type="ChEBI" id="CHEBI:29105"/>
    </ligand>
</feature>
<feature type="binding site" evidence="1">
    <location>
        <position position="912"/>
    </location>
    <ligand>
        <name>Zn(2+)</name>
        <dbReference type="ChEBI" id="CHEBI:29105"/>
    </ligand>
</feature>
<feature type="binding site" evidence="1">
    <location>
        <position position="915"/>
    </location>
    <ligand>
        <name>Zn(2+)</name>
        <dbReference type="ChEBI" id="CHEBI:29105"/>
    </ligand>
</feature>
<sequence>MDYRNTLNLPETDFPMRGNLPQREPEILQKWEEEDIYATVQKARAGRPKFVLHDGPPYANGDIHLGHALNKVIKDIIVKYKTMAGFDAPYVPGWDTHGLPIEQQVIKKLGVNRHAVSVVEFRRMCKEYAKKYISIQKEQFKRLGVRGDWQNPYLTLEKEYEAAQIGVFGKMARKKYIYKGLKPVYWCPSCETALAEAEIEYAEKTSHAIYVKFPVKEGKGVLTDENTFVIIWTTTPWTLPANLAITLHEEFSYVQVQVEKEHWLVAEGMLESLRSLWNLELPVEKRFVGKELEGVICKHPFIERDSVLILGEHVTLEAGTGCVHTAPGHGEEDFNVGKKYGLPVLCPVDHQGKFTAEGGAYAGMKVDKANPVIIEDLKNLHALVHEDKIKHSYAHCWRCNNPIIYRATEQWFASIDGFRKAALEEIDKVQWIPSWGKDRIYNMIADRGDWCISRQRTWGVPIPIFYCEDCGKEIISDETIAKVQEIFREEGSDAWFLRPAAELLPEGFTCACGGKSFRKETDIMDVWFDSGTSHTSVLMERKELAWPADLYMEGSDQHRGWFNSSLSTSVAAYGKAPYKAVLTHGFLVDEKGRKMSKSLGNGVDPLQVTKEMGADILRLWVCAADYKNDVAVSPRIMKQMSEAYRKIRNTLRFLLSNLNDFDPAKDRVAYKDLPEIDRWALLQLGKVTQRVLQGYEKYEFHWVYHSVHNFCAVELSAIYLDIVKDRLYVEGKNSTLRRASQTVLYDVLNALVRLMAPVLTYTADEIWPYVPGVPAGSHVQTEEMPEALPQWLDEALEKKWDTLLAVRSEVTKALEKARQDKLINHPLTAQVDLYPNAELEGFLRGIPNLSEIFIVSAVQLHSAGEEKPEGLSMAEDLAGFGIAVNSAAGEKCERCWIYDTGVGENQEHPTLCPRCASVVSHL</sequence>